<gene>
    <name evidence="6" type="primary">UXS1</name>
    <name evidence="8" type="ordered locus">At3g53520</name>
    <name evidence="9" type="ORF">F4P12.220</name>
</gene>
<organism>
    <name type="scientific">Arabidopsis thaliana</name>
    <name type="common">Mouse-ear cress</name>
    <dbReference type="NCBI Taxonomy" id="3702"/>
    <lineage>
        <taxon>Eukaryota</taxon>
        <taxon>Viridiplantae</taxon>
        <taxon>Streptophyta</taxon>
        <taxon>Embryophyta</taxon>
        <taxon>Tracheophyta</taxon>
        <taxon>Spermatophyta</taxon>
        <taxon>Magnoliopsida</taxon>
        <taxon>eudicotyledons</taxon>
        <taxon>Gunneridae</taxon>
        <taxon>Pentapetalae</taxon>
        <taxon>rosids</taxon>
        <taxon>malvids</taxon>
        <taxon>Brassicales</taxon>
        <taxon>Brassicaceae</taxon>
        <taxon>Camelineae</taxon>
        <taxon>Arabidopsis</taxon>
    </lineage>
</organism>
<name>UXS1_ARATH</name>
<comment type="function">
    <text evidence="5">Catalyzes the NAD-dependent decarboxylation of UDP-glucuronic acid to UDP-xylose. Necessary for the biosynthesis of the core tetrasaccharide in glycosaminoglycan biosynthesis.</text>
</comment>
<comment type="catalytic activity">
    <reaction evidence="5">
        <text>UDP-alpha-D-glucuronate + H(+) = UDP-alpha-D-xylose + CO2</text>
        <dbReference type="Rhea" id="RHEA:23916"/>
        <dbReference type="ChEBI" id="CHEBI:15378"/>
        <dbReference type="ChEBI" id="CHEBI:16526"/>
        <dbReference type="ChEBI" id="CHEBI:57632"/>
        <dbReference type="ChEBI" id="CHEBI:58052"/>
        <dbReference type="EC" id="4.1.1.35"/>
    </reaction>
    <physiologicalReaction direction="left-to-right" evidence="5">
        <dbReference type="Rhea" id="RHEA:23917"/>
    </physiologicalReaction>
</comment>
<comment type="cofactor">
    <cofactor evidence="5">
        <name>NAD(+)</name>
        <dbReference type="ChEBI" id="CHEBI:57540"/>
    </cofactor>
</comment>
<comment type="pathway">
    <text evidence="5">Nucleotide-sugar biosynthesis; UDP-alpha-D-xylose biosynthesis; UDP-alpha-D-xylose from UDP-alpha-D-glucuronate: step 1/1.</text>
</comment>
<comment type="subcellular location">
    <subcellularLocation>
        <location evidence="1">Golgi apparatus</location>
        <location evidence="1">Golgi stack membrane</location>
        <topology evidence="3">Single-pass type II membrane protein</topology>
    </subcellularLocation>
</comment>
<comment type="alternative products">
    <event type="alternative splicing"/>
    <isoform>
        <id>Q8VZC0-1</id>
        <name>1</name>
        <sequence type="displayed"/>
    </isoform>
    <isoform>
        <id>Q8VZC0-2</id>
        <name>2</name>
        <sequence type="described" ref="VSP_046296"/>
    </isoform>
</comment>
<comment type="tissue specificity">
    <text evidence="5">Ubiquitous.</text>
</comment>
<comment type="similarity">
    <text evidence="7">Belongs to the NAD(P)-dependent epimerase/dehydratase family. UDP-glucuronic acid decarboxylase subfamily.</text>
</comment>
<protein>
    <recommendedName>
        <fullName evidence="6">UDP-glucuronic acid decarboxylase 1</fullName>
        <ecNumber evidence="5">4.1.1.35</ecNumber>
    </recommendedName>
    <alternativeName>
        <fullName evidence="6">UDP-XYL synthase 1</fullName>
    </alternativeName>
    <alternativeName>
        <fullName evidence="6">UDP-glucuronate decarboxylase 1</fullName>
        <shortName evidence="6">UGD</shortName>
        <shortName evidence="6">UXS-1</shortName>
    </alternativeName>
</protein>
<dbReference type="EC" id="4.1.1.35" evidence="5"/>
<dbReference type="EMBL" id="AF387787">
    <property type="protein sequence ID" value="AAK70880.1"/>
    <property type="molecule type" value="mRNA"/>
</dbReference>
<dbReference type="EMBL" id="AL132966">
    <property type="protein sequence ID" value="CAB67659.1"/>
    <property type="molecule type" value="Genomic_DNA"/>
</dbReference>
<dbReference type="EMBL" id="CP002686">
    <property type="protein sequence ID" value="AEE79100.1"/>
    <property type="molecule type" value="Genomic_DNA"/>
</dbReference>
<dbReference type="EMBL" id="CP002686">
    <property type="protein sequence ID" value="AEE79101.1"/>
    <property type="molecule type" value="Genomic_DNA"/>
</dbReference>
<dbReference type="EMBL" id="AY065075">
    <property type="protein sequence ID" value="AAL38251.1"/>
    <property type="molecule type" value="mRNA"/>
</dbReference>
<dbReference type="EMBL" id="BT003355">
    <property type="protein sequence ID" value="AAO29973.1"/>
    <property type="molecule type" value="mRNA"/>
</dbReference>
<dbReference type="PIR" id="T45892">
    <property type="entry name" value="T45892"/>
</dbReference>
<dbReference type="RefSeq" id="NP_190920.3">
    <molecule id="Q8VZC0-2"/>
    <property type="nucleotide sequence ID" value="NM_115212.3"/>
</dbReference>
<dbReference type="RefSeq" id="NP_850694.2">
    <molecule id="Q8VZC0-1"/>
    <property type="nucleotide sequence ID" value="NM_180363.3"/>
</dbReference>
<dbReference type="SMR" id="Q8VZC0"/>
<dbReference type="FunCoup" id="Q8VZC0">
    <property type="interactions" value="4253"/>
</dbReference>
<dbReference type="STRING" id="3702.Q8VZC0"/>
<dbReference type="iPTMnet" id="Q8VZC0"/>
<dbReference type="SwissPalm" id="Q8VZC0"/>
<dbReference type="PaxDb" id="3702-AT3G53520.4"/>
<dbReference type="ProteomicsDB" id="228542">
    <molecule id="Q8VZC0-1"/>
</dbReference>
<dbReference type="EnsemblPlants" id="AT3G53520.1">
    <molecule id="Q8VZC0-1"/>
    <property type="protein sequence ID" value="AT3G53520.1"/>
    <property type="gene ID" value="AT3G53520"/>
</dbReference>
<dbReference type="EnsemblPlants" id="AT3G53520.2">
    <molecule id="Q8VZC0-2"/>
    <property type="protein sequence ID" value="AT3G53520.2"/>
    <property type="gene ID" value="AT3G53520"/>
</dbReference>
<dbReference type="GeneID" id="824520"/>
<dbReference type="Gramene" id="AT3G53520.1">
    <molecule id="Q8VZC0-1"/>
    <property type="protein sequence ID" value="AT3G53520.1"/>
    <property type="gene ID" value="AT3G53520"/>
</dbReference>
<dbReference type="Gramene" id="AT3G53520.2">
    <molecule id="Q8VZC0-2"/>
    <property type="protein sequence ID" value="AT3G53520.2"/>
    <property type="gene ID" value="AT3G53520"/>
</dbReference>
<dbReference type="KEGG" id="ath:AT3G53520"/>
<dbReference type="Araport" id="AT3G53520"/>
<dbReference type="TAIR" id="AT3G53520">
    <property type="gene designation" value="UXS1"/>
</dbReference>
<dbReference type="eggNOG" id="KOG1429">
    <property type="taxonomic scope" value="Eukaryota"/>
</dbReference>
<dbReference type="InParanoid" id="Q8VZC0"/>
<dbReference type="OMA" id="VVETICC"/>
<dbReference type="PhylomeDB" id="Q8VZC0"/>
<dbReference type="BioCyc" id="MetaCyc:AT3G53520-MONOMER"/>
<dbReference type="BRENDA" id="4.1.1.35">
    <property type="organism ID" value="399"/>
</dbReference>
<dbReference type="SABIO-RK" id="Q8VZC0"/>
<dbReference type="UniPathway" id="UPA00796">
    <property type="reaction ID" value="UER00771"/>
</dbReference>
<dbReference type="CD-CODE" id="4299E36E">
    <property type="entry name" value="Nucleolus"/>
</dbReference>
<dbReference type="PRO" id="PR:Q8VZC0"/>
<dbReference type="Proteomes" id="UP000006548">
    <property type="component" value="Chromosome 3"/>
</dbReference>
<dbReference type="ExpressionAtlas" id="Q8VZC0">
    <property type="expression patterns" value="baseline and differential"/>
</dbReference>
<dbReference type="GO" id="GO:0032580">
    <property type="term" value="C:Golgi cisterna membrane"/>
    <property type="evidence" value="ECO:0007669"/>
    <property type="project" value="UniProtKB-SubCell"/>
</dbReference>
<dbReference type="GO" id="GO:0070403">
    <property type="term" value="F:NAD+ binding"/>
    <property type="evidence" value="ECO:0007669"/>
    <property type="project" value="InterPro"/>
</dbReference>
<dbReference type="GO" id="GO:0048040">
    <property type="term" value="F:UDP-glucuronate decarboxylase activity"/>
    <property type="evidence" value="ECO:0000314"/>
    <property type="project" value="UniProtKB"/>
</dbReference>
<dbReference type="GO" id="GO:0042732">
    <property type="term" value="P:D-xylose metabolic process"/>
    <property type="evidence" value="ECO:0000314"/>
    <property type="project" value="UniProtKB"/>
</dbReference>
<dbReference type="GO" id="GO:0033320">
    <property type="term" value="P:UDP-D-xylose biosynthetic process"/>
    <property type="evidence" value="ECO:0007669"/>
    <property type="project" value="UniProtKB-UniPathway"/>
</dbReference>
<dbReference type="CDD" id="cd05230">
    <property type="entry name" value="UGD_SDR_e"/>
    <property type="match status" value="1"/>
</dbReference>
<dbReference type="FunFam" id="3.40.50.720:FF:000044">
    <property type="entry name" value="UDP-glucuronic acid decarboxylase 1"/>
    <property type="match status" value="1"/>
</dbReference>
<dbReference type="FunFam" id="3.40.50.720:FF:000073">
    <property type="entry name" value="UDP-glucuronic acid decarboxylase 2"/>
    <property type="match status" value="1"/>
</dbReference>
<dbReference type="Gene3D" id="3.40.50.720">
    <property type="entry name" value="NAD(P)-binding Rossmann-like Domain"/>
    <property type="match status" value="2"/>
</dbReference>
<dbReference type="InterPro" id="IPR016040">
    <property type="entry name" value="NAD(P)-bd_dom"/>
</dbReference>
<dbReference type="InterPro" id="IPR036291">
    <property type="entry name" value="NAD(P)-bd_dom_sf"/>
</dbReference>
<dbReference type="InterPro" id="IPR044516">
    <property type="entry name" value="UXS-like"/>
</dbReference>
<dbReference type="PANTHER" id="PTHR43078:SF22">
    <property type="entry name" value="UDP-GLUCURONIC ACID DECARBOXYLASE 1"/>
    <property type="match status" value="1"/>
</dbReference>
<dbReference type="PANTHER" id="PTHR43078">
    <property type="entry name" value="UDP-GLUCURONIC ACID DECARBOXYLASE-RELATED"/>
    <property type="match status" value="1"/>
</dbReference>
<dbReference type="Pfam" id="PF16363">
    <property type="entry name" value="GDP_Man_Dehyd"/>
    <property type="match status" value="1"/>
</dbReference>
<dbReference type="SUPFAM" id="SSF51735">
    <property type="entry name" value="NAD(P)-binding Rossmann-fold domains"/>
    <property type="match status" value="1"/>
</dbReference>
<keyword id="KW-0025">Alternative splicing</keyword>
<keyword id="KW-0210">Decarboxylase</keyword>
<keyword id="KW-0333">Golgi apparatus</keyword>
<keyword id="KW-0456">Lyase</keyword>
<keyword id="KW-0472">Membrane</keyword>
<keyword id="KW-0520">NAD</keyword>
<keyword id="KW-1185">Reference proteome</keyword>
<keyword id="KW-0735">Signal-anchor</keyword>
<keyword id="KW-0812">Transmembrane</keyword>
<keyword id="KW-1133">Transmembrane helix</keyword>
<evidence type="ECO:0000250" key="1">
    <source>
        <dbReference type="UniProtKB" id="Q5PQX0"/>
    </source>
</evidence>
<evidence type="ECO:0000250" key="2">
    <source>
        <dbReference type="UniProtKB" id="Q8NBZ7"/>
    </source>
</evidence>
<evidence type="ECO:0000255" key="3"/>
<evidence type="ECO:0000256" key="4">
    <source>
        <dbReference type="SAM" id="MobiDB-lite"/>
    </source>
</evidence>
<evidence type="ECO:0000269" key="5">
    <source>
    </source>
</evidence>
<evidence type="ECO:0000303" key="6">
    <source>
    </source>
</evidence>
<evidence type="ECO:0000305" key="7"/>
<evidence type="ECO:0000312" key="8">
    <source>
        <dbReference type="Araport" id="AT3G53520"/>
    </source>
</evidence>
<evidence type="ECO:0000312" key="9">
    <source>
        <dbReference type="EMBL" id="CAB67659.1"/>
    </source>
</evidence>
<feature type="chain" id="PRO_0000421982" description="UDP-glucuronic acid decarboxylase 1">
    <location>
        <begin position="1"/>
        <end position="435"/>
    </location>
</feature>
<feature type="topological domain" description="Cytoplasmic" evidence="3">
    <location>
        <begin position="1"/>
        <end position="48"/>
    </location>
</feature>
<feature type="transmembrane region" description="Helical; Signal-anchor for type II membrane protein" evidence="3">
    <location>
        <begin position="49"/>
        <end position="69"/>
    </location>
</feature>
<feature type="topological domain" description="Lumenal" evidence="3">
    <location>
        <begin position="70"/>
        <end position="435"/>
    </location>
</feature>
<feature type="region of interest" description="Disordered" evidence="4">
    <location>
        <begin position="1"/>
        <end position="33"/>
    </location>
</feature>
<feature type="region of interest" description="Disordered" evidence="4">
    <location>
        <begin position="91"/>
        <end position="110"/>
    </location>
</feature>
<feature type="region of interest" description="Disordered" evidence="4">
    <location>
        <begin position="380"/>
        <end position="401"/>
    </location>
</feature>
<feature type="compositionally biased region" description="Polar residues" evidence="4">
    <location>
        <begin position="91"/>
        <end position="100"/>
    </location>
</feature>
<feature type="compositionally biased region" description="Basic and acidic residues" evidence="4">
    <location>
        <begin position="385"/>
        <end position="401"/>
    </location>
</feature>
<feature type="active site" description="Proton acceptor" evidence="2">
    <location>
        <position position="262"/>
    </location>
</feature>
<feature type="binding site" evidence="2">
    <location>
        <position position="129"/>
    </location>
    <ligand>
        <name>NAD(+)</name>
        <dbReference type="ChEBI" id="CHEBI:57540"/>
    </ligand>
</feature>
<feature type="binding site" evidence="2">
    <location>
        <position position="130"/>
    </location>
    <ligand>
        <name>NAD(+)</name>
        <dbReference type="ChEBI" id="CHEBI:57540"/>
    </ligand>
</feature>
<feature type="binding site" evidence="2">
    <location>
        <position position="131"/>
    </location>
    <ligand>
        <name>NAD(+)</name>
        <dbReference type="ChEBI" id="CHEBI:57540"/>
    </ligand>
</feature>
<feature type="binding site" evidence="2">
    <location>
        <position position="150"/>
    </location>
    <ligand>
        <name>NAD(+)</name>
        <dbReference type="ChEBI" id="CHEBI:57540"/>
    </ligand>
</feature>
<feature type="binding site" evidence="2">
    <location>
        <position position="151"/>
    </location>
    <ligand>
        <name>NAD(+)</name>
        <dbReference type="ChEBI" id="CHEBI:57540"/>
    </ligand>
</feature>
<feature type="binding site" evidence="2">
    <location>
        <position position="153"/>
    </location>
    <ligand>
        <name>NAD(+)</name>
        <dbReference type="ChEBI" id="CHEBI:57540"/>
    </ligand>
</feature>
<feature type="binding site" evidence="2">
    <location>
        <position position="154"/>
    </location>
    <ligand>
        <name>NAD(+)</name>
        <dbReference type="ChEBI" id="CHEBI:57540"/>
    </ligand>
</feature>
<feature type="binding site" evidence="2">
    <location>
        <position position="155"/>
    </location>
    <ligand>
        <name>NAD(+)</name>
        <dbReference type="ChEBI" id="CHEBI:57540"/>
    </ligand>
</feature>
<feature type="binding site" evidence="2">
    <location>
        <position position="175"/>
    </location>
    <ligand>
        <name>NAD(+)</name>
        <dbReference type="ChEBI" id="CHEBI:57540"/>
    </ligand>
</feature>
<feature type="binding site" evidence="2">
    <location>
        <position position="176"/>
    </location>
    <ligand>
        <name>NAD(+)</name>
        <dbReference type="ChEBI" id="CHEBI:57540"/>
    </ligand>
</feature>
<feature type="binding site" evidence="2">
    <location>
        <position position="180"/>
    </location>
    <ligand>
        <name>UDP-alpha-D-glucuronate</name>
        <dbReference type="ChEBI" id="CHEBI:58052"/>
    </ligand>
</feature>
<feature type="binding site" evidence="2">
    <location>
        <position position="190"/>
    </location>
    <ligand>
        <name>NAD(+)</name>
        <dbReference type="ChEBI" id="CHEBI:57540"/>
    </ligand>
</feature>
<feature type="binding site" evidence="2">
    <location>
        <position position="208"/>
    </location>
    <ligand>
        <name>UDP-alpha-D-glucuronate</name>
        <dbReference type="ChEBI" id="CHEBI:58052"/>
    </ligand>
</feature>
<feature type="binding site" evidence="2">
    <location>
        <position position="209"/>
    </location>
    <ligand>
        <name>NAD(+)</name>
        <dbReference type="ChEBI" id="CHEBI:57540"/>
    </ligand>
</feature>
<feature type="binding site" evidence="2">
    <location>
        <position position="216"/>
    </location>
    <ligand>
        <name>UDP-alpha-D-glucuronate</name>
        <dbReference type="ChEBI" id="CHEBI:58052"/>
    </ligand>
</feature>
<feature type="binding site" evidence="2">
    <location>
        <position position="219"/>
    </location>
    <ligand>
        <name>UDP-alpha-D-glucuronate</name>
        <dbReference type="ChEBI" id="CHEBI:58052"/>
    </ligand>
</feature>
<feature type="binding site" evidence="2">
    <location>
        <position position="222"/>
    </location>
    <ligand>
        <name>UDP-alpha-D-glucuronate</name>
        <dbReference type="ChEBI" id="CHEBI:58052"/>
    </ligand>
</feature>
<feature type="binding site" evidence="2">
    <location>
        <position position="223"/>
    </location>
    <ligand>
        <name>UDP-alpha-D-glucuronate</name>
        <dbReference type="ChEBI" id="CHEBI:58052"/>
    </ligand>
</feature>
<feature type="binding site" evidence="2">
    <location>
        <position position="262"/>
    </location>
    <ligand>
        <name>NAD(+)</name>
        <dbReference type="ChEBI" id="CHEBI:57540"/>
    </ligand>
</feature>
<feature type="binding site" evidence="2">
    <location>
        <position position="266"/>
    </location>
    <ligand>
        <name>NAD(+)</name>
        <dbReference type="ChEBI" id="CHEBI:57540"/>
    </ligand>
</feature>
<feature type="binding site" evidence="2">
    <location>
        <position position="276"/>
    </location>
    <ligand>
        <name>UDP-alpha-D-glucuronate</name>
        <dbReference type="ChEBI" id="CHEBI:58052"/>
    </ligand>
</feature>
<feature type="binding site" evidence="2">
    <location>
        <position position="292"/>
    </location>
    <ligand>
        <name>NAD(+)</name>
        <dbReference type="ChEBI" id="CHEBI:57540"/>
    </ligand>
</feature>
<feature type="binding site" evidence="2">
    <location>
        <position position="303"/>
    </location>
    <ligand>
        <name>NAD(+)</name>
        <dbReference type="ChEBI" id="CHEBI:57540"/>
    </ligand>
</feature>
<feature type="splice variant" id="VSP_046296" description="In isoform 2." evidence="6">
    <location>
        <begin position="337"/>
        <end position="338"/>
    </location>
</feature>
<sequence length="435" mass="48631">MKQLHKQMSSKRDEETIPMSQSSPYSPKTLKHPRSLPRSLHYLFREQRLLFILVGILIGSTFFILQPSLSRLGAAESTSLITRSVSYAVTDSPPSRSTFNSGGGGGRTGRVPVGIGRKRLRIVVTGGAGFVGSHLVDKLIGRGDEVIVIDNFFTGRKENLVHLFSNPRFELIRHDVVEPILLEVDQIYHLACPASPVHYKYNPVKTIKTNVMGTLNMLGLAKRVGARFLLTSTSEVYGDPLEHPQKETYWGNVNPIGERSCYDEGKRTAETLAMDYHRGAGVEVRIARIFNTYGPRMCLDDGRVVSNFVAQTIRKHPMTVYGDGKQTRSFQYVSDLVEGLVALMENDHVGPFNLGNPGEFTMLELAEVVKEVIDPSATIEFKPNTADDPHKRKPDISKAKEQLNWEPKISLREGLPRMVSDFRNRILNEDEGKGL</sequence>
<proteinExistence type="evidence at protein level"/>
<reference key="1">
    <citation type="journal article" date="2002" name="Plant Physiol.">
        <title>Biosynthesis of UDP-xylose. Cloning and characterization of a novel Arabidopsis gene family, UXS, encoding soluble and putative membrane-bound UDP-glucuronic acid decarboxylase isoforms.</title>
        <authorList>
            <person name="Harper A.D."/>
            <person name="Bar-Peled M."/>
        </authorList>
    </citation>
    <scope>NUCLEOTIDE SEQUENCE [MRNA] (ISOFORM 2)</scope>
    <scope>GENE FAMILY</scope>
    <scope>FUNCTION</scope>
    <scope>CATALYTIC ACTIVITY</scope>
    <scope>PATHWAY</scope>
    <scope>COFACTOR</scope>
    <scope>TISSUE SPECIFICITY</scope>
</reference>
<reference key="2">
    <citation type="journal article" date="2000" name="Nature">
        <title>Sequence and analysis of chromosome 3 of the plant Arabidopsis thaliana.</title>
        <authorList>
            <person name="Salanoubat M."/>
            <person name="Lemcke K."/>
            <person name="Rieger M."/>
            <person name="Ansorge W."/>
            <person name="Unseld M."/>
            <person name="Fartmann B."/>
            <person name="Valle G."/>
            <person name="Bloecker H."/>
            <person name="Perez-Alonso M."/>
            <person name="Obermaier B."/>
            <person name="Delseny M."/>
            <person name="Boutry M."/>
            <person name="Grivell L.A."/>
            <person name="Mache R."/>
            <person name="Puigdomenech P."/>
            <person name="De Simone V."/>
            <person name="Choisne N."/>
            <person name="Artiguenave F."/>
            <person name="Robert C."/>
            <person name="Brottier P."/>
            <person name="Wincker P."/>
            <person name="Cattolico L."/>
            <person name="Weissenbach J."/>
            <person name="Saurin W."/>
            <person name="Quetier F."/>
            <person name="Schaefer M."/>
            <person name="Mueller-Auer S."/>
            <person name="Gabel C."/>
            <person name="Fuchs M."/>
            <person name="Benes V."/>
            <person name="Wurmbach E."/>
            <person name="Drzonek H."/>
            <person name="Erfle H."/>
            <person name="Jordan N."/>
            <person name="Bangert S."/>
            <person name="Wiedelmann R."/>
            <person name="Kranz H."/>
            <person name="Voss H."/>
            <person name="Holland R."/>
            <person name="Brandt P."/>
            <person name="Nyakatura G."/>
            <person name="Vezzi A."/>
            <person name="D'Angelo M."/>
            <person name="Pallavicini A."/>
            <person name="Toppo S."/>
            <person name="Simionati B."/>
            <person name="Conrad A."/>
            <person name="Hornischer K."/>
            <person name="Kauer G."/>
            <person name="Loehnert T.-H."/>
            <person name="Nordsiek G."/>
            <person name="Reichelt J."/>
            <person name="Scharfe M."/>
            <person name="Schoen O."/>
            <person name="Bargues M."/>
            <person name="Terol J."/>
            <person name="Climent J."/>
            <person name="Navarro P."/>
            <person name="Collado C."/>
            <person name="Perez-Perez A."/>
            <person name="Ottenwaelder B."/>
            <person name="Duchemin D."/>
            <person name="Cooke R."/>
            <person name="Laudie M."/>
            <person name="Berger-Llauro C."/>
            <person name="Purnelle B."/>
            <person name="Masuy D."/>
            <person name="de Haan M."/>
            <person name="Maarse A.C."/>
            <person name="Alcaraz J.-P."/>
            <person name="Cottet A."/>
            <person name="Casacuberta E."/>
            <person name="Monfort A."/>
            <person name="Argiriou A."/>
            <person name="Flores M."/>
            <person name="Liguori R."/>
            <person name="Vitale D."/>
            <person name="Mannhaupt G."/>
            <person name="Haase D."/>
            <person name="Schoof H."/>
            <person name="Rudd S."/>
            <person name="Zaccaria P."/>
            <person name="Mewes H.-W."/>
            <person name="Mayer K.F.X."/>
            <person name="Kaul S."/>
            <person name="Town C.D."/>
            <person name="Koo H.L."/>
            <person name="Tallon L.J."/>
            <person name="Jenkins J."/>
            <person name="Rooney T."/>
            <person name="Rizzo M."/>
            <person name="Walts A."/>
            <person name="Utterback T."/>
            <person name="Fujii C.Y."/>
            <person name="Shea T.P."/>
            <person name="Creasy T.H."/>
            <person name="Haas B."/>
            <person name="Maiti R."/>
            <person name="Wu D."/>
            <person name="Peterson J."/>
            <person name="Van Aken S."/>
            <person name="Pai G."/>
            <person name="Militscher J."/>
            <person name="Sellers P."/>
            <person name="Gill J.E."/>
            <person name="Feldblyum T.V."/>
            <person name="Preuss D."/>
            <person name="Lin X."/>
            <person name="Nierman W.C."/>
            <person name="Salzberg S.L."/>
            <person name="White O."/>
            <person name="Venter J.C."/>
            <person name="Fraser C.M."/>
            <person name="Kaneko T."/>
            <person name="Nakamura Y."/>
            <person name="Sato S."/>
            <person name="Kato T."/>
            <person name="Asamizu E."/>
            <person name="Sasamoto S."/>
            <person name="Kimura T."/>
            <person name="Idesawa K."/>
            <person name="Kawashima K."/>
            <person name="Kishida Y."/>
            <person name="Kiyokawa C."/>
            <person name="Kohara M."/>
            <person name="Matsumoto M."/>
            <person name="Matsuno A."/>
            <person name="Muraki A."/>
            <person name="Nakayama S."/>
            <person name="Nakazaki N."/>
            <person name="Shinpo S."/>
            <person name="Takeuchi C."/>
            <person name="Wada T."/>
            <person name="Watanabe A."/>
            <person name="Yamada M."/>
            <person name="Yasuda M."/>
            <person name="Tabata S."/>
        </authorList>
    </citation>
    <scope>NUCLEOTIDE SEQUENCE [LARGE SCALE GENOMIC DNA]</scope>
    <source>
        <strain>cv. Columbia</strain>
    </source>
</reference>
<reference key="3">
    <citation type="journal article" date="2017" name="Plant J.">
        <title>Araport11: a complete reannotation of the Arabidopsis thaliana reference genome.</title>
        <authorList>
            <person name="Cheng C.Y."/>
            <person name="Krishnakumar V."/>
            <person name="Chan A.P."/>
            <person name="Thibaud-Nissen F."/>
            <person name="Schobel S."/>
            <person name="Town C.D."/>
        </authorList>
    </citation>
    <scope>GENOME REANNOTATION</scope>
    <source>
        <strain>cv. Columbia</strain>
    </source>
</reference>
<reference key="4">
    <citation type="journal article" date="2003" name="Science">
        <title>Empirical analysis of transcriptional activity in the Arabidopsis genome.</title>
        <authorList>
            <person name="Yamada K."/>
            <person name="Lim J."/>
            <person name="Dale J.M."/>
            <person name="Chen H."/>
            <person name="Shinn P."/>
            <person name="Palm C.J."/>
            <person name="Southwick A.M."/>
            <person name="Wu H.C."/>
            <person name="Kim C.J."/>
            <person name="Nguyen M."/>
            <person name="Pham P.K."/>
            <person name="Cheuk R.F."/>
            <person name="Karlin-Newmann G."/>
            <person name="Liu S.X."/>
            <person name="Lam B."/>
            <person name="Sakano H."/>
            <person name="Wu T."/>
            <person name="Yu G."/>
            <person name="Miranda M."/>
            <person name="Quach H.L."/>
            <person name="Tripp M."/>
            <person name="Chang C.H."/>
            <person name="Lee J.M."/>
            <person name="Toriumi M.J."/>
            <person name="Chan M.M."/>
            <person name="Tang C.C."/>
            <person name="Onodera C.S."/>
            <person name="Deng J.M."/>
            <person name="Akiyama K."/>
            <person name="Ansari Y."/>
            <person name="Arakawa T."/>
            <person name="Banh J."/>
            <person name="Banno F."/>
            <person name="Bowser L."/>
            <person name="Brooks S.Y."/>
            <person name="Carninci P."/>
            <person name="Chao Q."/>
            <person name="Choy N."/>
            <person name="Enju A."/>
            <person name="Goldsmith A.D."/>
            <person name="Gurjal M."/>
            <person name="Hansen N.F."/>
            <person name="Hayashizaki Y."/>
            <person name="Johnson-Hopson C."/>
            <person name="Hsuan V.W."/>
            <person name="Iida K."/>
            <person name="Karnes M."/>
            <person name="Khan S."/>
            <person name="Koesema E."/>
            <person name="Ishida J."/>
            <person name="Jiang P.X."/>
            <person name="Jones T."/>
            <person name="Kawai J."/>
            <person name="Kamiya A."/>
            <person name="Meyers C."/>
            <person name="Nakajima M."/>
            <person name="Narusaka M."/>
            <person name="Seki M."/>
            <person name="Sakurai T."/>
            <person name="Satou M."/>
            <person name="Tamse R."/>
            <person name="Vaysberg M."/>
            <person name="Wallender E.K."/>
            <person name="Wong C."/>
            <person name="Yamamura Y."/>
            <person name="Yuan S."/>
            <person name="Shinozaki K."/>
            <person name="Davis R.W."/>
            <person name="Theologis A."/>
            <person name="Ecker J.R."/>
        </authorList>
    </citation>
    <scope>NUCLEOTIDE SEQUENCE [LARGE SCALE MRNA] (ISOFORM 1)</scope>
    <source>
        <strain>cv. Columbia</strain>
    </source>
</reference>
<reference key="5">
    <citation type="journal article" date="2009" name="J. Proteomics">
        <title>Phosphoproteomic analysis of nuclei-enriched fractions from Arabidopsis thaliana.</title>
        <authorList>
            <person name="Jones A.M.E."/>
            <person name="MacLean D."/>
            <person name="Studholme D.J."/>
            <person name="Serna-Sanz A."/>
            <person name="Andreasson E."/>
            <person name="Rathjen J.P."/>
            <person name="Peck S.C."/>
        </authorList>
    </citation>
    <scope>IDENTIFICATION BY MASS SPECTROMETRY [LARGE SCALE ANALYSIS]</scope>
    <source>
        <strain>cv. Columbia</strain>
    </source>
</reference>
<accession>Q8VZC0</accession>
<accession>Q3EAK3</accession>
<accession>Q9LFG7</accession>